<accession>Q89AM1</accession>
<dbReference type="EC" id="1.3.1.9"/>
<dbReference type="EMBL" id="AE016826">
    <property type="protein sequence ID" value="AAO26973.1"/>
    <property type="status" value="ALT_INIT"/>
    <property type="molecule type" value="Genomic_DNA"/>
</dbReference>
<dbReference type="RefSeq" id="WP_044010523.1">
    <property type="nucleotide sequence ID" value="NC_004545.1"/>
</dbReference>
<dbReference type="SMR" id="Q89AM1"/>
<dbReference type="STRING" id="224915.bbp_246"/>
<dbReference type="KEGG" id="bab:bbp_246"/>
<dbReference type="eggNOG" id="COG0623">
    <property type="taxonomic scope" value="Bacteria"/>
</dbReference>
<dbReference type="HOGENOM" id="CLU_010194_10_1_6"/>
<dbReference type="OrthoDB" id="9803628at2"/>
<dbReference type="UniPathway" id="UPA00078"/>
<dbReference type="UniPathway" id="UPA00094"/>
<dbReference type="Proteomes" id="UP000000601">
    <property type="component" value="Chromosome"/>
</dbReference>
<dbReference type="GO" id="GO:0004318">
    <property type="term" value="F:enoyl-[acyl-carrier-protein] reductase (NADH) activity"/>
    <property type="evidence" value="ECO:0000250"/>
    <property type="project" value="UniProtKB"/>
</dbReference>
<dbReference type="GO" id="GO:0042802">
    <property type="term" value="F:identical protein binding"/>
    <property type="evidence" value="ECO:0000250"/>
    <property type="project" value="UniProtKB"/>
</dbReference>
<dbReference type="GO" id="GO:0009102">
    <property type="term" value="P:biotin biosynthetic process"/>
    <property type="evidence" value="ECO:0000250"/>
    <property type="project" value="UniProtKB"/>
</dbReference>
<dbReference type="GO" id="GO:0030497">
    <property type="term" value="P:fatty acid elongation"/>
    <property type="evidence" value="ECO:0000250"/>
    <property type="project" value="UniProtKB"/>
</dbReference>
<dbReference type="CDD" id="cd05372">
    <property type="entry name" value="ENR_SDR"/>
    <property type="match status" value="1"/>
</dbReference>
<dbReference type="FunFam" id="3.40.50.720:FF:000054">
    <property type="entry name" value="Enoyl-[acyl-carrier-protein] reductase [NADH]"/>
    <property type="match status" value="1"/>
</dbReference>
<dbReference type="Gene3D" id="3.40.50.720">
    <property type="entry name" value="NAD(P)-binding Rossmann-like Domain"/>
    <property type="match status" value="1"/>
</dbReference>
<dbReference type="InterPro" id="IPR014358">
    <property type="entry name" value="Enoyl-ACP_Rdtase_NADH"/>
</dbReference>
<dbReference type="InterPro" id="IPR036291">
    <property type="entry name" value="NAD(P)-bd_dom_sf"/>
</dbReference>
<dbReference type="InterPro" id="IPR002347">
    <property type="entry name" value="SDR_fam"/>
</dbReference>
<dbReference type="PANTHER" id="PTHR43159">
    <property type="entry name" value="ENOYL-[ACYL-CARRIER-PROTEIN] REDUCTASE"/>
    <property type="match status" value="1"/>
</dbReference>
<dbReference type="PANTHER" id="PTHR43159:SF2">
    <property type="entry name" value="ENOYL-[ACYL-CARRIER-PROTEIN] REDUCTASE [NADH], CHLOROPLASTIC"/>
    <property type="match status" value="1"/>
</dbReference>
<dbReference type="Pfam" id="PF13561">
    <property type="entry name" value="adh_short_C2"/>
    <property type="match status" value="1"/>
</dbReference>
<dbReference type="PIRSF" id="PIRSF000094">
    <property type="entry name" value="Enoyl-ACP_rdct"/>
    <property type="match status" value="1"/>
</dbReference>
<dbReference type="SUPFAM" id="SSF51735">
    <property type="entry name" value="NAD(P)-binding Rossmann-fold domains"/>
    <property type="match status" value="1"/>
</dbReference>
<reference key="1">
    <citation type="journal article" date="2003" name="Proc. Natl. Acad. Sci. U.S.A.">
        <title>Reductive genome evolution in Buchnera aphidicola.</title>
        <authorList>
            <person name="van Ham R.C.H.J."/>
            <person name="Kamerbeek J."/>
            <person name="Palacios C."/>
            <person name="Rausell C."/>
            <person name="Abascal F."/>
            <person name="Bastolla U."/>
            <person name="Fernandez J.M."/>
            <person name="Jimenez L."/>
            <person name="Postigo M."/>
            <person name="Silva F.J."/>
            <person name="Tamames J."/>
            <person name="Viguera E."/>
            <person name="Latorre A."/>
            <person name="Valencia A."/>
            <person name="Moran F."/>
            <person name="Moya A."/>
        </authorList>
    </citation>
    <scope>NUCLEOTIDE SEQUENCE [LARGE SCALE GENOMIC DNA]</scope>
    <source>
        <strain>Bp</strain>
    </source>
</reference>
<protein>
    <recommendedName>
        <fullName>Enoyl-[acyl-carrier-protein] reductase [NADH] FabI</fullName>
        <shortName>ENR</shortName>
        <ecNumber>1.3.1.9</ecNumber>
    </recommendedName>
    <alternativeName>
        <fullName>NADH-dependent enoyl-ACP reductase</fullName>
    </alternativeName>
</protein>
<organism>
    <name type="scientific">Buchnera aphidicola subsp. Baizongia pistaciae (strain Bp)</name>
    <dbReference type="NCBI Taxonomy" id="224915"/>
    <lineage>
        <taxon>Bacteria</taxon>
        <taxon>Pseudomonadati</taxon>
        <taxon>Pseudomonadota</taxon>
        <taxon>Gammaproteobacteria</taxon>
        <taxon>Enterobacterales</taxon>
        <taxon>Erwiniaceae</taxon>
        <taxon>Buchnera</taxon>
    </lineage>
</organism>
<gene>
    <name type="primary">fabI</name>
    <name type="ordered locus">bbp_246</name>
</gene>
<evidence type="ECO:0000250" key="1"/>
<evidence type="ECO:0000305" key="2"/>
<sequence>MGFLEEKKILVTGISNKYSIAFGIAKALHKQNATLAFSYHTDRLKNKVYELAKELGVKIVIPCDVSDDNSIKRLFFNISKKWITFDGFIHSIAFAPKNQLSGDYVSSITRLDFSNVLDVSSYSFVGMAKACRSILKKGSSLLTLSYIGSKKVVPNYNVMGIAKASLESNVRYMASCMGLNGIRVNAISSSPIKTLSSYHIKNFKKILNHTTSRSLNNNLTTVEDVGNTAAFLCSDLSKGITGQIIYVDGGFNITAMSNSE</sequence>
<name>FABI_BUCBP</name>
<proteinExistence type="inferred from homology"/>
<keyword id="KW-0093">Biotin biosynthesis</keyword>
<keyword id="KW-0275">Fatty acid biosynthesis</keyword>
<keyword id="KW-0276">Fatty acid metabolism</keyword>
<keyword id="KW-0444">Lipid biosynthesis</keyword>
<keyword id="KW-0443">Lipid metabolism</keyword>
<keyword id="KW-0520">NAD</keyword>
<keyword id="KW-0560">Oxidoreductase</keyword>
<keyword id="KW-1185">Reference proteome</keyword>
<feature type="chain" id="PRO_0000054898" description="Enoyl-[acyl-carrier-protein] reductase [NADH] FabI">
    <location>
        <begin position="1"/>
        <end position="260"/>
    </location>
</feature>
<feature type="active site" description="Proton acceptor" evidence="1">
    <location>
        <position position="146"/>
    </location>
</feature>
<feature type="active site" description="Proton acceptor" evidence="1">
    <location>
        <position position="156"/>
    </location>
</feature>
<feature type="binding site" evidence="1">
    <location>
        <position position="13"/>
    </location>
    <ligand>
        <name>NAD(+)</name>
        <dbReference type="ChEBI" id="CHEBI:57540"/>
    </ligand>
</feature>
<feature type="binding site" evidence="1">
    <location>
        <begin position="19"/>
        <end position="20"/>
    </location>
    <ligand>
        <name>NAD(+)</name>
        <dbReference type="ChEBI" id="CHEBI:57540"/>
    </ligand>
</feature>
<feature type="binding site" evidence="1">
    <location>
        <begin position="64"/>
        <end position="65"/>
    </location>
    <ligand>
        <name>NAD(+)</name>
        <dbReference type="ChEBI" id="CHEBI:57540"/>
    </ligand>
</feature>
<feature type="binding site" evidence="1">
    <location>
        <position position="92"/>
    </location>
    <ligand>
        <name>NAD(+)</name>
        <dbReference type="ChEBI" id="CHEBI:57540"/>
    </ligand>
</feature>
<feature type="binding site" evidence="1">
    <location>
        <position position="95"/>
    </location>
    <ligand>
        <name>substrate</name>
    </ligand>
</feature>
<feature type="binding site" evidence="1">
    <location>
        <position position="163"/>
    </location>
    <ligand>
        <name>NAD(+)</name>
        <dbReference type="ChEBI" id="CHEBI:57540"/>
    </ligand>
</feature>
<feature type="binding site" evidence="1">
    <location>
        <begin position="192"/>
        <end position="194"/>
    </location>
    <ligand>
        <name>NAD(+)</name>
        <dbReference type="ChEBI" id="CHEBI:57540"/>
    </ligand>
</feature>
<feature type="site" description="Involved in acyl-ACP binding" evidence="1">
    <location>
        <position position="201"/>
    </location>
</feature>
<feature type="site" description="Involved in acyl-ACP binding" evidence="1">
    <location>
        <position position="204"/>
    </location>
</feature>
<feature type="site" description="Involved in acyl-ACP binding" evidence="1">
    <location>
        <position position="205"/>
    </location>
</feature>
<comment type="function">
    <text evidence="1">Catalyzes the reduction of a carbon-carbon double bond in an enoyl moiety that is covalently linked to an acyl carrier protein (ACP). Involved in the elongation cycle of fatty acid which are used in the lipid metabolism and in the biotin biosynthesis (By similarity).</text>
</comment>
<comment type="catalytic activity">
    <reaction>
        <text>a 2,3-saturated acyl-[ACP] + NAD(+) = a (2E)-enoyl-[ACP] + NADH + H(+)</text>
        <dbReference type="Rhea" id="RHEA:10240"/>
        <dbReference type="Rhea" id="RHEA-COMP:9925"/>
        <dbReference type="Rhea" id="RHEA-COMP:9926"/>
        <dbReference type="ChEBI" id="CHEBI:15378"/>
        <dbReference type="ChEBI" id="CHEBI:57540"/>
        <dbReference type="ChEBI" id="CHEBI:57945"/>
        <dbReference type="ChEBI" id="CHEBI:78784"/>
        <dbReference type="ChEBI" id="CHEBI:78785"/>
        <dbReference type="EC" id="1.3.1.9"/>
    </reaction>
</comment>
<comment type="pathway">
    <text>Lipid metabolism; fatty acid biosynthesis.</text>
</comment>
<comment type="pathway">
    <text>Cofactor biosynthesis; biotin biosynthesis.</text>
</comment>
<comment type="subunit">
    <text evidence="1">Homotetramer.</text>
</comment>
<comment type="similarity">
    <text evidence="2">Belongs to the short-chain dehydrogenases/reductases (SDR) family. FabI subfamily.</text>
</comment>
<comment type="sequence caution" evidence="2">
    <conflict type="erroneous initiation">
        <sequence resource="EMBL-CDS" id="AAO26973"/>
    </conflict>
    <text>Extended N-terminus.</text>
</comment>